<comment type="function">
    <text evidence="1">Catalyzes the oxidation of 3-carboxy-2-hydroxy-4-methylpentanoate (3-isopropylmalate) to 3-carboxy-4-methyl-2-oxopentanoate. The product decarboxylates to 4-methyl-2 oxopentanoate.</text>
</comment>
<comment type="catalytic activity">
    <reaction evidence="1">
        <text>(2R,3S)-3-isopropylmalate + NAD(+) = 4-methyl-2-oxopentanoate + CO2 + NADH</text>
        <dbReference type="Rhea" id="RHEA:32271"/>
        <dbReference type="ChEBI" id="CHEBI:16526"/>
        <dbReference type="ChEBI" id="CHEBI:17865"/>
        <dbReference type="ChEBI" id="CHEBI:35121"/>
        <dbReference type="ChEBI" id="CHEBI:57540"/>
        <dbReference type="ChEBI" id="CHEBI:57945"/>
        <dbReference type="EC" id="1.1.1.85"/>
    </reaction>
</comment>
<comment type="cofactor">
    <cofactor evidence="1">
        <name>Mg(2+)</name>
        <dbReference type="ChEBI" id="CHEBI:18420"/>
    </cofactor>
    <cofactor evidence="1">
        <name>Mn(2+)</name>
        <dbReference type="ChEBI" id="CHEBI:29035"/>
    </cofactor>
    <text evidence="1">Binds 1 Mg(2+) or Mn(2+) ion per subunit.</text>
</comment>
<comment type="pathway">
    <text evidence="1">Amino-acid biosynthesis; L-leucine biosynthesis; L-leucine from 3-methyl-2-oxobutanoate: step 3/4.</text>
</comment>
<comment type="subunit">
    <text evidence="1">Homodimer.</text>
</comment>
<comment type="subcellular location">
    <subcellularLocation>
        <location evidence="1">Cytoplasm</location>
    </subcellularLocation>
</comment>
<comment type="similarity">
    <text evidence="1">Belongs to the isocitrate and isopropylmalate dehydrogenases family. LeuB type 1 subfamily.</text>
</comment>
<protein>
    <recommendedName>
        <fullName evidence="1">3-isopropylmalate dehydrogenase</fullName>
        <ecNumber evidence="1">1.1.1.85</ecNumber>
    </recommendedName>
    <alternativeName>
        <fullName evidence="1">3-IPM-DH</fullName>
    </alternativeName>
    <alternativeName>
        <fullName evidence="1">Beta-IPM dehydrogenase</fullName>
        <shortName evidence="1">IMDH</shortName>
    </alternativeName>
</protein>
<reference key="1">
    <citation type="journal article" date="2006" name="J. Bacteriol.">
        <title>Pathogenomic sequence analysis of Bacillus cereus and Bacillus thuringiensis isolates closely related to Bacillus anthracis.</title>
        <authorList>
            <person name="Han C.S."/>
            <person name="Xie G."/>
            <person name="Challacombe J.F."/>
            <person name="Altherr M.R."/>
            <person name="Bhotika S.S."/>
            <person name="Bruce D."/>
            <person name="Campbell C.S."/>
            <person name="Campbell M.L."/>
            <person name="Chen J."/>
            <person name="Chertkov O."/>
            <person name="Cleland C."/>
            <person name="Dimitrijevic M."/>
            <person name="Doggett N.A."/>
            <person name="Fawcett J.J."/>
            <person name="Glavina T."/>
            <person name="Goodwin L.A."/>
            <person name="Hill K.K."/>
            <person name="Hitchcock P."/>
            <person name="Jackson P.J."/>
            <person name="Keim P."/>
            <person name="Kewalramani A.R."/>
            <person name="Longmire J."/>
            <person name="Lucas S."/>
            <person name="Malfatti S."/>
            <person name="McMurry K."/>
            <person name="Meincke L.J."/>
            <person name="Misra M."/>
            <person name="Moseman B.L."/>
            <person name="Mundt M."/>
            <person name="Munk A.C."/>
            <person name="Okinaka R.T."/>
            <person name="Parson-Quintana B."/>
            <person name="Reilly L.P."/>
            <person name="Richardson P."/>
            <person name="Robinson D.L."/>
            <person name="Rubin E."/>
            <person name="Saunders E."/>
            <person name="Tapia R."/>
            <person name="Tesmer J.G."/>
            <person name="Thayer N."/>
            <person name="Thompson L.S."/>
            <person name="Tice H."/>
            <person name="Ticknor L.O."/>
            <person name="Wills P.L."/>
            <person name="Brettin T.S."/>
            <person name="Gilna P."/>
        </authorList>
    </citation>
    <scope>NUCLEOTIDE SEQUENCE [LARGE SCALE GENOMIC DNA]</scope>
    <source>
        <strain>ZK / E33L</strain>
    </source>
</reference>
<keyword id="KW-0028">Amino-acid biosynthesis</keyword>
<keyword id="KW-0100">Branched-chain amino acid biosynthesis</keyword>
<keyword id="KW-0963">Cytoplasm</keyword>
<keyword id="KW-0432">Leucine biosynthesis</keyword>
<keyword id="KW-0460">Magnesium</keyword>
<keyword id="KW-0464">Manganese</keyword>
<keyword id="KW-0479">Metal-binding</keyword>
<keyword id="KW-0520">NAD</keyword>
<keyword id="KW-0560">Oxidoreductase</keyword>
<gene>
    <name evidence="1" type="primary">leuB</name>
    <name type="ordered locus">BCE33L1286</name>
</gene>
<accession>Q63DX7</accession>
<proteinExistence type="inferred from homology"/>
<feature type="chain" id="PRO_0000083636" description="3-isopropylmalate dehydrogenase">
    <location>
        <begin position="1"/>
        <end position="354"/>
    </location>
</feature>
<feature type="binding site" evidence="1">
    <location>
        <begin position="76"/>
        <end position="87"/>
    </location>
    <ligand>
        <name>NAD(+)</name>
        <dbReference type="ChEBI" id="CHEBI:57540"/>
    </ligand>
</feature>
<feature type="binding site" evidence="1">
    <location>
        <position position="94"/>
    </location>
    <ligand>
        <name>substrate</name>
    </ligand>
</feature>
<feature type="binding site" evidence="1">
    <location>
        <position position="104"/>
    </location>
    <ligand>
        <name>substrate</name>
    </ligand>
</feature>
<feature type="binding site" evidence="1">
    <location>
        <position position="130"/>
    </location>
    <ligand>
        <name>substrate</name>
    </ligand>
</feature>
<feature type="binding site" evidence="1">
    <location>
        <position position="215"/>
    </location>
    <ligand>
        <name>Mg(2+)</name>
        <dbReference type="ChEBI" id="CHEBI:18420"/>
    </ligand>
</feature>
<feature type="binding site" evidence="1">
    <location>
        <position position="215"/>
    </location>
    <ligand>
        <name>substrate</name>
    </ligand>
</feature>
<feature type="binding site" evidence="1">
    <location>
        <position position="239"/>
    </location>
    <ligand>
        <name>Mg(2+)</name>
        <dbReference type="ChEBI" id="CHEBI:18420"/>
    </ligand>
</feature>
<feature type="binding site" evidence="1">
    <location>
        <position position="243"/>
    </location>
    <ligand>
        <name>Mg(2+)</name>
        <dbReference type="ChEBI" id="CHEBI:18420"/>
    </ligand>
</feature>
<feature type="binding site" evidence="1">
    <location>
        <begin position="273"/>
        <end position="285"/>
    </location>
    <ligand>
        <name>NAD(+)</name>
        <dbReference type="ChEBI" id="CHEBI:57540"/>
    </ligand>
</feature>
<feature type="site" description="Important for catalysis" evidence="1">
    <location>
        <position position="137"/>
    </location>
</feature>
<feature type="site" description="Important for catalysis" evidence="1">
    <location>
        <position position="183"/>
    </location>
</feature>
<name>LEU3_BACCZ</name>
<evidence type="ECO:0000255" key="1">
    <source>
        <dbReference type="HAMAP-Rule" id="MF_01033"/>
    </source>
</evidence>
<dbReference type="EC" id="1.1.1.85" evidence="1"/>
<dbReference type="EMBL" id="CP000001">
    <property type="protein sequence ID" value="AAU18962.1"/>
    <property type="molecule type" value="Genomic_DNA"/>
</dbReference>
<dbReference type="RefSeq" id="WP_000415358.1">
    <property type="nucleotide sequence ID" value="NC_006274.1"/>
</dbReference>
<dbReference type="SMR" id="Q63DX7"/>
<dbReference type="KEGG" id="bcz:BCE33L1286"/>
<dbReference type="PATRIC" id="fig|288681.22.peg.4268"/>
<dbReference type="UniPathway" id="UPA00048">
    <property type="reaction ID" value="UER00072"/>
</dbReference>
<dbReference type="Proteomes" id="UP000002612">
    <property type="component" value="Chromosome"/>
</dbReference>
<dbReference type="GO" id="GO:0005829">
    <property type="term" value="C:cytosol"/>
    <property type="evidence" value="ECO:0007669"/>
    <property type="project" value="TreeGrafter"/>
</dbReference>
<dbReference type="GO" id="GO:0003862">
    <property type="term" value="F:3-isopropylmalate dehydrogenase activity"/>
    <property type="evidence" value="ECO:0007669"/>
    <property type="project" value="UniProtKB-UniRule"/>
</dbReference>
<dbReference type="GO" id="GO:0000287">
    <property type="term" value="F:magnesium ion binding"/>
    <property type="evidence" value="ECO:0007669"/>
    <property type="project" value="InterPro"/>
</dbReference>
<dbReference type="GO" id="GO:0051287">
    <property type="term" value="F:NAD binding"/>
    <property type="evidence" value="ECO:0007669"/>
    <property type="project" value="InterPro"/>
</dbReference>
<dbReference type="GO" id="GO:0009098">
    <property type="term" value="P:L-leucine biosynthetic process"/>
    <property type="evidence" value="ECO:0007669"/>
    <property type="project" value="UniProtKB-UniRule"/>
</dbReference>
<dbReference type="FunFam" id="3.40.718.10:FF:000006">
    <property type="entry name" value="3-isopropylmalate dehydrogenase"/>
    <property type="match status" value="1"/>
</dbReference>
<dbReference type="Gene3D" id="3.40.718.10">
    <property type="entry name" value="Isopropylmalate Dehydrogenase"/>
    <property type="match status" value="1"/>
</dbReference>
<dbReference type="HAMAP" id="MF_01033">
    <property type="entry name" value="LeuB_type1"/>
    <property type="match status" value="1"/>
</dbReference>
<dbReference type="InterPro" id="IPR019818">
    <property type="entry name" value="IsoCit/isopropylmalate_DH_CS"/>
</dbReference>
<dbReference type="InterPro" id="IPR024084">
    <property type="entry name" value="IsoPropMal-DH-like_dom"/>
</dbReference>
<dbReference type="InterPro" id="IPR004429">
    <property type="entry name" value="Isopropylmalate_DH"/>
</dbReference>
<dbReference type="NCBIfam" id="TIGR00169">
    <property type="entry name" value="leuB"/>
    <property type="match status" value="1"/>
</dbReference>
<dbReference type="PANTHER" id="PTHR42979">
    <property type="entry name" value="3-ISOPROPYLMALATE DEHYDROGENASE"/>
    <property type="match status" value="1"/>
</dbReference>
<dbReference type="PANTHER" id="PTHR42979:SF1">
    <property type="entry name" value="3-ISOPROPYLMALATE DEHYDROGENASE"/>
    <property type="match status" value="1"/>
</dbReference>
<dbReference type="Pfam" id="PF00180">
    <property type="entry name" value="Iso_dh"/>
    <property type="match status" value="1"/>
</dbReference>
<dbReference type="SMART" id="SM01329">
    <property type="entry name" value="Iso_dh"/>
    <property type="match status" value="1"/>
</dbReference>
<dbReference type="SUPFAM" id="SSF53659">
    <property type="entry name" value="Isocitrate/Isopropylmalate dehydrogenase-like"/>
    <property type="match status" value="1"/>
</dbReference>
<dbReference type="PROSITE" id="PS00470">
    <property type="entry name" value="IDH_IMDH"/>
    <property type="match status" value="1"/>
</dbReference>
<sequence length="354" mass="38493">MEKRIVCLAGDGVGPEVMESAKEVLHMVERLYGHHFHLQDEHFGGVAIDLTGQPLPQRTLAACLASDAVLLGAVGGPRWDGAKERPEKGLLALRKGLGVFANVRPVTVESETAHLSPLKKADEIDFVVVRELTGGIYFSYPKERTDEVATDTLTYHRHEIERIVSYAFQLASKRKKKVTSIDKANVLESSKLWRTVTEEVALRYPDVELEHILVDAAAMELIRNPGRFDVIVTENLFGDILSDEASVLAGSLGMLPSASHAEKGPSLYEPIHGSAPDIAGKNKANPIAMMRSVAMMLGQSFGLTREGCAIEEAISAVLKSGKCTEDIGGTETTTSFTKAVMQEMEEQALVGRGR</sequence>
<organism>
    <name type="scientific">Bacillus cereus (strain ZK / E33L)</name>
    <dbReference type="NCBI Taxonomy" id="288681"/>
    <lineage>
        <taxon>Bacteria</taxon>
        <taxon>Bacillati</taxon>
        <taxon>Bacillota</taxon>
        <taxon>Bacilli</taxon>
        <taxon>Bacillales</taxon>
        <taxon>Bacillaceae</taxon>
        <taxon>Bacillus</taxon>
        <taxon>Bacillus cereus group</taxon>
    </lineage>
</organism>